<feature type="chain" id="PRO_0000207692" description="Endonuclease-1">
    <location>
        <begin position="1"/>
        <end position="245"/>
    </location>
</feature>
<protein>
    <recommendedName>
        <fullName>Endonuclease-1</fullName>
        <ecNumber>3.1.21.1</ecNumber>
    </recommendedName>
    <alternativeName>
        <fullName>Endonuclease I</fullName>
        <shortName>Endo I</shortName>
    </alternativeName>
</protein>
<gene>
    <name type="primary">endA</name>
    <name type="ordered locus">bbp_369</name>
</gene>
<proteinExistence type="inferred from homology"/>
<keyword id="KW-0255">Endonuclease</keyword>
<keyword id="KW-0378">Hydrolase</keyword>
<keyword id="KW-0540">Nuclease</keyword>
<keyword id="KW-1185">Reference proteome</keyword>
<evidence type="ECO:0000250" key="1"/>
<evidence type="ECO:0000305" key="2"/>
<sequence length="245" mass="29154">MLIRSIFFFTILIFSTCLSSNENIKHHYHKNFNQIKKLAQKINIDAPGTFYCGCKIFWKEKKGIPELNSCGYHIRKNANRANRIEWEHVMPAWQFGHSKSCWKKGGRKNCIHDYNYQKIETDLHNLQPVIGEINGDRSNFMYNQFPKSTLNGQYGQCSMKIDFKNKLVEPPDISKGAISRIYFYMSDFYHFKLSKKQKKLFLMWNKKYNVTNWECMRDNLIFKIQGNHNPYVYSKCQKNNTNKNI</sequence>
<comment type="function">
    <text evidence="1">Has double-strand break activity.</text>
</comment>
<comment type="catalytic activity">
    <reaction>
        <text>Endonucleolytic cleavage to 5'-phosphodinucleotide and 5'-phosphooligonucleotide end-products.</text>
        <dbReference type="EC" id="3.1.21.1"/>
    </reaction>
</comment>
<comment type="similarity">
    <text evidence="2">Belongs to the EndA/NucM nuclease family.</text>
</comment>
<organism>
    <name type="scientific">Buchnera aphidicola subsp. Baizongia pistaciae (strain Bp)</name>
    <dbReference type="NCBI Taxonomy" id="224915"/>
    <lineage>
        <taxon>Bacteria</taxon>
        <taxon>Pseudomonadati</taxon>
        <taxon>Pseudomonadota</taxon>
        <taxon>Gammaproteobacteria</taxon>
        <taxon>Enterobacterales</taxon>
        <taxon>Erwiniaceae</taxon>
        <taxon>Buchnera</taxon>
    </lineage>
</organism>
<reference key="1">
    <citation type="journal article" date="2003" name="Proc. Natl. Acad. Sci. U.S.A.">
        <title>Reductive genome evolution in Buchnera aphidicola.</title>
        <authorList>
            <person name="van Ham R.C.H.J."/>
            <person name="Kamerbeek J."/>
            <person name="Palacios C."/>
            <person name="Rausell C."/>
            <person name="Abascal F."/>
            <person name="Bastolla U."/>
            <person name="Fernandez J.M."/>
            <person name="Jimenez L."/>
            <person name="Postigo M."/>
            <person name="Silva F.J."/>
            <person name="Tamames J."/>
            <person name="Viguera E."/>
            <person name="Latorre A."/>
            <person name="Valencia A."/>
            <person name="Moran F."/>
            <person name="Moya A."/>
        </authorList>
    </citation>
    <scope>NUCLEOTIDE SEQUENCE [LARGE SCALE GENOMIC DNA]</scope>
    <source>
        <strain>Bp</strain>
    </source>
</reference>
<accession>Q89AD7</accession>
<name>END1_BUCBP</name>
<dbReference type="EC" id="3.1.21.1"/>
<dbReference type="EMBL" id="AE016826">
    <property type="protein sequence ID" value="AAO27086.1"/>
    <property type="molecule type" value="Genomic_DNA"/>
</dbReference>
<dbReference type="RefSeq" id="WP_011091487.1">
    <property type="nucleotide sequence ID" value="NC_004545.1"/>
</dbReference>
<dbReference type="SMR" id="Q89AD7"/>
<dbReference type="KEGG" id="bab:bbp_369"/>
<dbReference type="eggNOG" id="COG2356">
    <property type="taxonomic scope" value="Bacteria"/>
</dbReference>
<dbReference type="HOGENOM" id="CLU_070541_0_0_6"/>
<dbReference type="OrthoDB" id="9800417at2"/>
<dbReference type="Proteomes" id="UP000000601">
    <property type="component" value="Chromosome"/>
</dbReference>
<dbReference type="GO" id="GO:0004530">
    <property type="term" value="F:deoxyribonuclease I activity"/>
    <property type="evidence" value="ECO:0007669"/>
    <property type="project" value="UniProtKB-EC"/>
</dbReference>
<dbReference type="InterPro" id="IPR007346">
    <property type="entry name" value="Endonuclease-I"/>
</dbReference>
<dbReference type="InterPro" id="IPR044925">
    <property type="entry name" value="His-Me_finger_sf"/>
</dbReference>
<dbReference type="PANTHER" id="PTHR33607">
    <property type="entry name" value="ENDONUCLEASE-1"/>
    <property type="match status" value="1"/>
</dbReference>
<dbReference type="PANTHER" id="PTHR33607:SF2">
    <property type="entry name" value="ENDONUCLEASE-1"/>
    <property type="match status" value="1"/>
</dbReference>
<dbReference type="Pfam" id="PF04231">
    <property type="entry name" value="Endonuclease_1"/>
    <property type="match status" value="1"/>
</dbReference>
<dbReference type="SUPFAM" id="SSF54060">
    <property type="entry name" value="His-Me finger endonucleases"/>
    <property type="match status" value="1"/>
</dbReference>